<proteinExistence type="inferred from homology"/>
<gene>
    <name evidence="1" type="primary">thiE</name>
    <name type="ordered locus">CV_0150</name>
</gene>
<evidence type="ECO:0000255" key="1">
    <source>
        <dbReference type="HAMAP-Rule" id="MF_00097"/>
    </source>
</evidence>
<organism>
    <name type="scientific">Chromobacterium violaceum (strain ATCC 12472 / DSM 30191 / JCM 1249 / CCUG 213 / NBRC 12614 / NCIMB 9131 / NCTC 9757 / MK)</name>
    <dbReference type="NCBI Taxonomy" id="243365"/>
    <lineage>
        <taxon>Bacteria</taxon>
        <taxon>Pseudomonadati</taxon>
        <taxon>Pseudomonadota</taxon>
        <taxon>Betaproteobacteria</taxon>
        <taxon>Neisseriales</taxon>
        <taxon>Chromobacteriaceae</taxon>
        <taxon>Chromobacterium</taxon>
    </lineage>
</organism>
<accession>Q7P1R3</accession>
<keyword id="KW-0460">Magnesium</keyword>
<keyword id="KW-0479">Metal-binding</keyword>
<keyword id="KW-1185">Reference proteome</keyword>
<keyword id="KW-0784">Thiamine biosynthesis</keyword>
<keyword id="KW-0808">Transferase</keyword>
<name>THIE_CHRVO</name>
<comment type="function">
    <text evidence="1">Condenses 4-methyl-5-(beta-hydroxyethyl)thiazole monophosphate (THZ-P) and 2-methyl-4-amino-5-hydroxymethyl pyrimidine pyrophosphate (HMP-PP) to form thiamine monophosphate (TMP).</text>
</comment>
<comment type="catalytic activity">
    <reaction evidence="1">
        <text>2-[(2R,5Z)-2-carboxy-4-methylthiazol-5(2H)-ylidene]ethyl phosphate + 4-amino-2-methyl-5-(diphosphooxymethyl)pyrimidine + 2 H(+) = thiamine phosphate + CO2 + diphosphate</text>
        <dbReference type="Rhea" id="RHEA:47844"/>
        <dbReference type="ChEBI" id="CHEBI:15378"/>
        <dbReference type="ChEBI" id="CHEBI:16526"/>
        <dbReference type="ChEBI" id="CHEBI:33019"/>
        <dbReference type="ChEBI" id="CHEBI:37575"/>
        <dbReference type="ChEBI" id="CHEBI:57841"/>
        <dbReference type="ChEBI" id="CHEBI:62899"/>
        <dbReference type="EC" id="2.5.1.3"/>
    </reaction>
</comment>
<comment type="catalytic activity">
    <reaction evidence="1">
        <text>2-(2-carboxy-4-methylthiazol-5-yl)ethyl phosphate + 4-amino-2-methyl-5-(diphosphooxymethyl)pyrimidine + 2 H(+) = thiamine phosphate + CO2 + diphosphate</text>
        <dbReference type="Rhea" id="RHEA:47848"/>
        <dbReference type="ChEBI" id="CHEBI:15378"/>
        <dbReference type="ChEBI" id="CHEBI:16526"/>
        <dbReference type="ChEBI" id="CHEBI:33019"/>
        <dbReference type="ChEBI" id="CHEBI:37575"/>
        <dbReference type="ChEBI" id="CHEBI:57841"/>
        <dbReference type="ChEBI" id="CHEBI:62890"/>
        <dbReference type="EC" id="2.5.1.3"/>
    </reaction>
</comment>
<comment type="catalytic activity">
    <reaction evidence="1">
        <text>4-methyl-5-(2-phosphooxyethyl)-thiazole + 4-amino-2-methyl-5-(diphosphooxymethyl)pyrimidine + H(+) = thiamine phosphate + diphosphate</text>
        <dbReference type="Rhea" id="RHEA:22328"/>
        <dbReference type="ChEBI" id="CHEBI:15378"/>
        <dbReference type="ChEBI" id="CHEBI:33019"/>
        <dbReference type="ChEBI" id="CHEBI:37575"/>
        <dbReference type="ChEBI" id="CHEBI:57841"/>
        <dbReference type="ChEBI" id="CHEBI:58296"/>
        <dbReference type="EC" id="2.5.1.3"/>
    </reaction>
</comment>
<comment type="cofactor">
    <cofactor evidence="1">
        <name>Mg(2+)</name>
        <dbReference type="ChEBI" id="CHEBI:18420"/>
    </cofactor>
    <text evidence="1">Binds 1 Mg(2+) ion per subunit.</text>
</comment>
<comment type="pathway">
    <text evidence="1">Cofactor biosynthesis; thiamine diphosphate biosynthesis; thiamine phosphate from 4-amino-2-methyl-5-diphosphomethylpyrimidine and 4-methyl-5-(2-phosphoethyl)-thiazole: step 1/1.</text>
</comment>
<comment type="similarity">
    <text evidence="1">Belongs to the thiamine-phosphate synthase family.</text>
</comment>
<feature type="chain" id="PRO_0000157004" description="Thiamine-phosphate synthase">
    <location>
        <begin position="1"/>
        <end position="207"/>
    </location>
</feature>
<feature type="binding site" evidence="1">
    <location>
        <begin position="37"/>
        <end position="41"/>
    </location>
    <ligand>
        <name>4-amino-2-methyl-5-(diphosphooxymethyl)pyrimidine</name>
        <dbReference type="ChEBI" id="CHEBI:57841"/>
    </ligand>
</feature>
<feature type="binding site" evidence="1">
    <location>
        <position position="69"/>
    </location>
    <ligand>
        <name>4-amino-2-methyl-5-(diphosphooxymethyl)pyrimidine</name>
        <dbReference type="ChEBI" id="CHEBI:57841"/>
    </ligand>
</feature>
<feature type="binding site" evidence="1">
    <location>
        <position position="70"/>
    </location>
    <ligand>
        <name>Mg(2+)</name>
        <dbReference type="ChEBI" id="CHEBI:18420"/>
    </ligand>
</feature>
<feature type="binding site" evidence="1">
    <location>
        <position position="89"/>
    </location>
    <ligand>
        <name>Mg(2+)</name>
        <dbReference type="ChEBI" id="CHEBI:18420"/>
    </ligand>
</feature>
<feature type="binding site" evidence="1">
    <location>
        <position position="108"/>
    </location>
    <ligand>
        <name>4-amino-2-methyl-5-(diphosphooxymethyl)pyrimidine</name>
        <dbReference type="ChEBI" id="CHEBI:57841"/>
    </ligand>
</feature>
<feature type="binding site" evidence="1">
    <location>
        <begin position="135"/>
        <end position="137"/>
    </location>
    <ligand>
        <name>2-[(2R,5Z)-2-carboxy-4-methylthiazol-5(2H)-ylidene]ethyl phosphate</name>
        <dbReference type="ChEBI" id="CHEBI:62899"/>
    </ligand>
</feature>
<feature type="binding site" evidence="1">
    <location>
        <position position="138"/>
    </location>
    <ligand>
        <name>4-amino-2-methyl-5-(diphosphooxymethyl)pyrimidine</name>
        <dbReference type="ChEBI" id="CHEBI:57841"/>
    </ligand>
</feature>
<feature type="binding site" evidence="1">
    <location>
        <position position="164"/>
    </location>
    <ligand>
        <name>2-[(2R,5Z)-2-carboxy-4-methylthiazol-5(2H)-ylidene]ethyl phosphate</name>
        <dbReference type="ChEBI" id="CHEBI:62899"/>
    </ligand>
</feature>
<protein>
    <recommendedName>
        <fullName evidence="1">Thiamine-phosphate synthase</fullName>
        <shortName evidence="1">TP synthase</shortName>
        <shortName evidence="1">TPS</shortName>
        <ecNumber evidence="1">2.5.1.3</ecNumber>
    </recommendedName>
    <alternativeName>
        <fullName evidence="1">Thiamine-phosphate pyrophosphorylase</fullName>
        <shortName evidence="1">TMP pyrophosphorylase</shortName>
        <shortName evidence="1">TMP-PPase</shortName>
    </alternativeName>
</protein>
<dbReference type="EC" id="2.5.1.3" evidence="1"/>
<dbReference type="EMBL" id="AE016825">
    <property type="protein sequence ID" value="AAQ57829.1"/>
    <property type="molecule type" value="Genomic_DNA"/>
</dbReference>
<dbReference type="RefSeq" id="WP_011133705.1">
    <property type="nucleotide sequence ID" value="NC_005085.1"/>
</dbReference>
<dbReference type="SMR" id="Q7P1R3"/>
<dbReference type="STRING" id="243365.CV_0150"/>
<dbReference type="KEGG" id="cvi:CV_0150"/>
<dbReference type="eggNOG" id="COG0352">
    <property type="taxonomic scope" value="Bacteria"/>
</dbReference>
<dbReference type="HOGENOM" id="CLU_018272_3_1_4"/>
<dbReference type="UniPathway" id="UPA00060">
    <property type="reaction ID" value="UER00141"/>
</dbReference>
<dbReference type="Proteomes" id="UP000001424">
    <property type="component" value="Chromosome"/>
</dbReference>
<dbReference type="GO" id="GO:0005737">
    <property type="term" value="C:cytoplasm"/>
    <property type="evidence" value="ECO:0007669"/>
    <property type="project" value="TreeGrafter"/>
</dbReference>
<dbReference type="GO" id="GO:0000287">
    <property type="term" value="F:magnesium ion binding"/>
    <property type="evidence" value="ECO:0007669"/>
    <property type="project" value="UniProtKB-UniRule"/>
</dbReference>
<dbReference type="GO" id="GO:0004789">
    <property type="term" value="F:thiamine-phosphate diphosphorylase activity"/>
    <property type="evidence" value="ECO:0007669"/>
    <property type="project" value="UniProtKB-UniRule"/>
</dbReference>
<dbReference type="GO" id="GO:0009228">
    <property type="term" value="P:thiamine biosynthetic process"/>
    <property type="evidence" value="ECO:0007669"/>
    <property type="project" value="UniProtKB-KW"/>
</dbReference>
<dbReference type="GO" id="GO:0009229">
    <property type="term" value="P:thiamine diphosphate biosynthetic process"/>
    <property type="evidence" value="ECO:0007669"/>
    <property type="project" value="UniProtKB-UniRule"/>
</dbReference>
<dbReference type="CDD" id="cd00564">
    <property type="entry name" value="TMP_TenI"/>
    <property type="match status" value="1"/>
</dbReference>
<dbReference type="Gene3D" id="3.20.20.70">
    <property type="entry name" value="Aldolase class I"/>
    <property type="match status" value="1"/>
</dbReference>
<dbReference type="HAMAP" id="MF_00097">
    <property type="entry name" value="TMP_synthase"/>
    <property type="match status" value="1"/>
</dbReference>
<dbReference type="InterPro" id="IPR013785">
    <property type="entry name" value="Aldolase_TIM"/>
</dbReference>
<dbReference type="InterPro" id="IPR036206">
    <property type="entry name" value="ThiamineP_synth_sf"/>
</dbReference>
<dbReference type="InterPro" id="IPR022998">
    <property type="entry name" value="ThiamineP_synth_TenI"/>
</dbReference>
<dbReference type="InterPro" id="IPR034291">
    <property type="entry name" value="TMP_synthase"/>
</dbReference>
<dbReference type="NCBIfam" id="TIGR00693">
    <property type="entry name" value="thiE"/>
    <property type="match status" value="1"/>
</dbReference>
<dbReference type="PANTHER" id="PTHR20857">
    <property type="entry name" value="THIAMINE-PHOSPHATE PYROPHOSPHORYLASE"/>
    <property type="match status" value="1"/>
</dbReference>
<dbReference type="PANTHER" id="PTHR20857:SF15">
    <property type="entry name" value="THIAMINE-PHOSPHATE SYNTHASE"/>
    <property type="match status" value="1"/>
</dbReference>
<dbReference type="Pfam" id="PF02581">
    <property type="entry name" value="TMP-TENI"/>
    <property type="match status" value="1"/>
</dbReference>
<dbReference type="SUPFAM" id="SSF51391">
    <property type="entry name" value="Thiamin phosphate synthase"/>
    <property type="match status" value="1"/>
</dbReference>
<sequence length="207" mass="20832">MPPRVEGLYAVTPDGLDDARLFALAAAALAGGARALQYRDKSGDAGRRLRQAAELQRLCRAHGALFIVNDDVELAERIGADGVHLGRDDGDIAAARRRLGADAVIGASCYDRIELARAALAAGASYVAFGAVFPSRTKPHAAAAPLSLFADAAALGANAVAIGGIAAGNAGRAVEAGADAIAVIGGLFDADDTAAAARALAGWFGAR</sequence>
<reference key="1">
    <citation type="journal article" date="2003" name="Proc. Natl. Acad. Sci. U.S.A.">
        <title>The complete genome sequence of Chromobacterium violaceum reveals remarkable and exploitable bacterial adaptability.</title>
        <authorList>
            <person name="Vasconcelos A.T.R."/>
            <person name="de Almeida D.F."/>
            <person name="Hungria M."/>
            <person name="Guimaraes C.T."/>
            <person name="Antonio R.V."/>
            <person name="Almeida F.C."/>
            <person name="de Almeida L.G.P."/>
            <person name="de Almeida R."/>
            <person name="Alves-Gomes J.A."/>
            <person name="Andrade E.M."/>
            <person name="Araripe J."/>
            <person name="de Araujo M.F.F."/>
            <person name="Astolfi-Filho S."/>
            <person name="Azevedo V."/>
            <person name="Baptista A.J."/>
            <person name="Bataus L.A.M."/>
            <person name="Batista J.S."/>
            <person name="Belo A."/>
            <person name="van den Berg C."/>
            <person name="Bogo M."/>
            <person name="Bonatto S."/>
            <person name="Bordignon J."/>
            <person name="Brigido M.M."/>
            <person name="Brito C.A."/>
            <person name="Brocchi M."/>
            <person name="Burity H.A."/>
            <person name="Camargo A.A."/>
            <person name="Cardoso D.D.P."/>
            <person name="Carneiro N.P."/>
            <person name="Carraro D.M."/>
            <person name="Carvalho C.M.B."/>
            <person name="Cascardo J.C.M."/>
            <person name="Cavada B.S."/>
            <person name="Chueire L.M.O."/>
            <person name="Creczynski-Pasa T.B."/>
            <person name="Cunha-Junior N.C."/>
            <person name="Fagundes N."/>
            <person name="Falcao C.L."/>
            <person name="Fantinatti F."/>
            <person name="Farias I.P."/>
            <person name="Felipe M.S.S."/>
            <person name="Ferrari L.P."/>
            <person name="Ferro J.A."/>
            <person name="Ferro M.I.T."/>
            <person name="Franco G.R."/>
            <person name="Freitas N.S.A."/>
            <person name="Furlan L.R."/>
            <person name="Gazzinelli R.T."/>
            <person name="Gomes E.A."/>
            <person name="Goncalves P.R."/>
            <person name="Grangeiro T.B."/>
            <person name="Grattapaglia D."/>
            <person name="Grisard E.C."/>
            <person name="Hanna E.S."/>
            <person name="Jardim S.N."/>
            <person name="Laurino J."/>
            <person name="Leoi L.C.T."/>
            <person name="Lima L.F.A."/>
            <person name="Loureiro M.F."/>
            <person name="Lyra M.C.C.P."/>
            <person name="Madeira H.M.F."/>
            <person name="Manfio G.P."/>
            <person name="Maranhao A.Q."/>
            <person name="Martins W.S."/>
            <person name="di Mauro S.M.Z."/>
            <person name="de Medeiros S.R.B."/>
            <person name="Meissner R.V."/>
            <person name="Moreira M.A.M."/>
            <person name="Nascimento F.F."/>
            <person name="Nicolas M.F."/>
            <person name="Oliveira J.G."/>
            <person name="Oliveira S.C."/>
            <person name="Paixao R.F.C."/>
            <person name="Parente J.A."/>
            <person name="Pedrosa F.O."/>
            <person name="Pena S.D.J."/>
            <person name="Pereira J.O."/>
            <person name="Pereira M."/>
            <person name="Pinto L.S.R.C."/>
            <person name="Pinto L.S."/>
            <person name="Porto J.I.R."/>
            <person name="Potrich D.P."/>
            <person name="Ramalho-Neto C.E."/>
            <person name="Reis A.M.M."/>
            <person name="Rigo L.U."/>
            <person name="Rondinelli E."/>
            <person name="Santos E.B.P."/>
            <person name="Santos F.R."/>
            <person name="Schneider M.P.C."/>
            <person name="Seuanez H.N."/>
            <person name="Silva A.M.R."/>
            <person name="da Silva A.L.C."/>
            <person name="Silva D.W."/>
            <person name="Silva R."/>
            <person name="Simoes I.C."/>
            <person name="Simon D."/>
            <person name="Soares C.M.A."/>
            <person name="Soares R.B.A."/>
            <person name="Souza E.M."/>
            <person name="Souza K.R.L."/>
            <person name="Souza R.C."/>
            <person name="Steffens M.B.R."/>
            <person name="Steindel M."/>
            <person name="Teixeira S.R."/>
            <person name="Urmenyi T."/>
            <person name="Vettore A."/>
            <person name="Wassem R."/>
            <person name="Zaha A."/>
            <person name="Simpson A.J.G."/>
        </authorList>
    </citation>
    <scope>NUCLEOTIDE SEQUENCE [LARGE SCALE GENOMIC DNA]</scope>
    <source>
        <strain>ATCC 12472 / DSM 30191 / JCM 1249 / CCUG 213 / NBRC 12614 / NCIMB 9131 / NCTC 9757 / MK</strain>
    </source>
</reference>